<organism>
    <name type="scientific">Haemophilus influenzae (strain 86-028NP)</name>
    <dbReference type="NCBI Taxonomy" id="281310"/>
    <lineage>
        <taxon>Bacteria</taxon>
        <taxon>Pseudomonadati</taxon>
        <taxon>Pseudomonadota</taxon>
        <taxon>Gammaproteobacteria</taxon>
        <taxon>Pasteurellales</taxon>
        <taxon>Pasteurellaceae</taxon>
        <taxon>Haemophilus</taxon>
    </lineage>
</organism>
<sequence>MKDSIIAKLESLKERYEELEALLGDVSVISDQDKFRAYSKEYSQLEEVVKCFNRWTQLNQNIEEAEILLDDPEMKEMAQMEIEESKAEIEEVEQQLQILLLPKDPNDEYNCYLEIRAGTGGDEAGIFAGDLFRMYSRYAESKRWCVEMLSANESEQGGYKEVIVKVSGEGVYGQLKFESGGHRVQRVPKTESQGRIHTSACTVAVMPELPESEMPEINPADLRIDTYRSSGAGGQHVNTTDSAVRITHIPTGIVVECQDERSQHKNKAKAMSVLASRIVQAEQERQAAEQTDMRRNLLGSGDRSDKIRTYNYPQGRVTDHRINLTIYRLDEVMNGKIDELIQPIITEYQADQLAALSEQN</sequence>
<protein>
    <recommendedName>
        <fullName evidence="1">Peptide chain release factor 1</fullName>
        <shortName evidence="1">RF-1</shortName>
    </recommendedName>
</protein>
<evidence type="ECO:0000255" key="1">
    <source>
        <dbReference type="HAMAP-Rule" id="MF_00093"/>
    </source>
</evidence>
<evidence type="ECO:0000256" key="2">
    <source>
        <dbReference type="SAM" id="MobiDB-lite"/>
    </source>
</evidence>
<evidence type="ECO:0000305" key="3"/>
<keyword id="KW-0963">Cytoplasm</keyword>
<keyword id="KW-0488">Methylation</keyword>
<keyword id="KW-0648">Protein biosynthesis</keyword>
<gene>
    <name evidence="1" type="primary">prfA</name>
    <name type="ordered locus">NTHI1572</name>
</gene>
<feature type="chain" id="PRO_0000263282" description="Peptide chain release factor 1">
    <location>
        <begin position="1"/>
        <end position="360"/>
    </location>
</feature>
<feature type="region of interest" description="Disordered" evidence="2">
    <location>
        <begin position="285"/>
        <end position="309"/>
    </location>
</feature>
<feature type="compositionally biased region" description="Basic and acidic residues" evidence="2">
    <location>
        <begin position="285"/>
        <end position="295"/>
    </location>
</feature>
<feature type="modified residue" description="N5-methylglutamine" evidence="1">
    <location>
        <position position="235"/>
    </location>
</feature>
<reference key="1">
    <citation type="journal article" date="2005" name="J. Bacteriol.">
        <title>Genomic sequence of an otitis media isolate of nontypeable Haemophilus influenzae: comparative study with H. influenzae serotype d, strain KW20.</title>
        <authorList>
            <person name="Harrison A."/>
            <person name="Dyer D.W."/>
            <person name="Gillaspy A."/>
            <person name="Ray W.C."/>
            <person name="Mungur R."/>
            <person name="Carson M.B."/>
            <person name="Zhong H."/>
            <person name="Gipson J."/>
            <person name="Gipson M."/>
            <person name="Johnson L.S."/>
            <person name="Lewis L."/>
            <person name="Bakaletz L.O."/>
            <person name="Munson R.S. Jr."/>
        </authorList>
    </citation>
    <scope>NUCLEOTIDE SEQUENCE [LARGE SCALE GENOMIC DNA]</scope>
    <source>
        <strain>86-028NP</strain>
    </source>
</reference>
<dbReference type="EMBL" id="CP000057">
    <property type="protein sequence ID" value="AAX88376.1"/>
    <property type="status" value="ALT_INIT"/>
    <property type="molecule type" value="Genomic_DNA"/>
</dbReference>
<dbReference type="RefSeq" id="WP_038441466.1">
    <property type="nucleotide sequence ID" value="NC_007146.2"/>
</dbReference>
<dbReference type="SMR" id="Q4QKS1"/>
<dbReference type="GeneID" id="93220311"/>
<dbReference type="KEGG" id="hit:NTHI1572"/>
<dbReference type="HOGENOM" id="CLU_036856_0_1_6"/>
<dbReference type="Proteomes" id="UP000002525">
    <property type="component" value="Chromosome"/>
</dbReference>
<dbReference type="GO" id="GO:0005737">
    <property type="term" value="C:cytoplasm"/>
    <property type="evidence" value="ECO:0007669"/>
    <property type="project" value="UniProtKB-SubCell"/>
</dbReference>
<dbReference type="GO" id="GO:0016149">
    <property type="term" value="F:translation release factor activity, codon specific"/>
    <property type="evidence" value="ECO:0007669"/>
    <property type="project" value="UniProtKB-UniRule"/>
</dbReference>
<dbReference type="FunFam" id="3.30.160.20:FF:000004">
    <property type="entry name" value="Peptide chain release factor 1"/>
    <property type="match status" value="1"/>
</dbReference>
<dbReference type="FunFam" id="3.30.70.1660:FF:000002">
    <property type="entry name" value="Peptide chain release factor 1"/>
    <property type="match status" value="1"/>
</dbReference>
<dbReference type="FunFam" id="3.30.70.1660:FF:000004">
    <property type="entry name" value="Peptide chain release factor 1"/>
    <property type="match status" value="1"/>
</dbReference>
<dbReference type="Gene3D" id="3.30.160.20">
    <property type="match status" value="1"/>
</dbReference>
<dbReference type="Gene3D" id="3.30.70.1660">
    <property type="match status" value="1"/>
</dbReference>
<dbReference type="Gene3D" id="6.10.140.1950">
    <property type="match status" value="1"/>
</dbReference>
<dbReference type="HAMAP" id="MF_00093">
    <property type="entry name" value="Rel_fac_1"/>
    <property type="match status" value="1"/>
</dbReference>
<dbReference type="InterPro" id="IPR005139">
    <property type="entry name" value="PCRF"/>
</dbReference>
<dbReference type="InterPro" id="IPR000352">
    <property type="entry name" value="Pep_chain_release_fac_I"/>
</dbReference>
<dbReference type="InterPro" id="IPR045853">
    <property type="entry name" value="Pep_chain_release_fac_I_sf"/>
</dbReference>
<dbReference type="InterPro" id="IPR050057">
    <property type="entry name" value="Prokaryotic/Mito_RF"/>
</dbReference>
<dbReference type="InterPro" id="IPR004373">
    <property type="entry name" value="RF-1"/>
</dbReference>
<dbReference type="NCBIfam" id="TIGR00019">
    <property type="entry name" value="prfA"/>
    <property type="match status" value="1"/>
</dbReference>
<dbReference type="NCBIfam" id="NF001859">
    <property type="entry name" value="PRK00591.1"/>
    <property type="match status" value="1"/>
</dbReference>
<dbReference type="PANTHER" id="PTHR43804">
    <property type="entry name" value="LD18447P"/>
    <property type="match status" value="1"/>
</dbReference>
<dbReference type="PANTHER" id="PTHR43804:SF7">
    <property type="entry name" value="LD18447P"/>
    <property type="match status" value="1"/>
</dbReference>
<dbReference type="Pfam" id="PF03462">
    <property type="entry name" value="PCRF"/>
    <property type="match status" value="1"/>
</dbReference>
<dbReference type="Pfam" id="PF00472">
    <property type="entry name" value="RF-1"/>
    <property type="match status" value="1"/>
</dbReference>
<dbReference type="SMART" id="SM00937">
    <property type="entry name" value="PCRF"/>
    <property type="match status" value="1"/>
</dbReference>
<dbReference type="SUPFAM" id="SSF75620">
    <property type="entry name" value="Release factor"/>
    <property type="match status" value="1"/>
</dbReference>
<dbReference type="PROSITE" id="PS00745">
    <property type="entry name" value="RF_PROK_I"/>
    <property type="match status" value="1"/>
</dbReference>
<name>RF1_HAEI8</name>
<accession>Q4QKS1</accession>
<proteinExistence type="inferred from homology"/>
<comment type="function">
    <text evidence="1">Peptide chain release factor 1 directs the termination of translation in response to the peptide chain termination codons UAG and UAA.</text>
</comment>
<comment type="subcellular location">
    <subcellularLocation>
        <location evidence="1">Cytoplasm</location>
    </subcellularLocation>
</comment>
<comment type="PTM">
    <text evidence="1">Methylated by PrmC. Methylation increases the termination efficiency of RF1.</text>
</comment>
<comment type="similarity">
    <text evidence="1">Belongs to the prokaryotic/mitochondrial release factor family.</text>
</comment>
<comment type="sequence caution" evidence="3">
    <conflict type="erroneous initiation">
        <sequence resource="EMBL-CDS" id="AAX88376"/>
    </conflict>
</comment>